<evidence type="ECO:0000250" key="1">
    <source>
        <dbReference type="UniProtKB" id="P56198"/>
    </source>
</evidence>
<evidence type="ECO:0000250" key="2">
    <source>
        <dbReference type="UniProtKB" id="Q96AQ7"/>
    </source>
</evidence>
<evidence type="ECO:0000255" key="3">
    <source>
        <dbReference type="PROSITE-ProRule" id="PRU00447"/>
    </source>
</evidence>
<evidence type="ECO:0000269" key="4">
    <source>
    </source>
</evidence>
<evidence type="ECO:0000303" key="5">
    <source>
    </source>
</evidence>
<evidence type="ECO:0000305" key="6"/>
<evidence type="ECO:0000312" key="7">
    <source>
        <dbReference type="RGD" id="1562113"/>
    </source>
</evidence>
<protein>
    <recommendedName>
        <fullName evidence="6">Lipid transferase CIDEC</fullName>
    </recommendedName>
    <alternativeName>
        <fullName evidence="6">Cell death-inducing DFFA-like effector protein C</fullName>
    </alternativeName>
    <alternativeName>
        <fullName evidence="5">Fat-specific protein FSP27</fullName>
    </alternativeName>
</protein>
<organism>
    <name type="scientific">Rattus norvegicus</name>
    <name type="common">Rat</name>
    <dbReference type="NCBI Taxonomy" id="10116"/>
    <lineage>
        <taxon>Eukaryota</taxon>
        <taxon>Metazoa</taxon>
        <taxon>Chordata</taxon>
        <taxon>Craniata</taxon>
        <taxon>Vertebrata</taxon>
        <taxon>Euteleostomi</taxon>
        <taxon>Mammalia</taxon>
        <taxon>Eutheria</taxon>
        <taxon>Euarchontoglires</taxon>
        <taxon>Glires</taxon>
        <taxon>Rodentia</taxon>
        <taxon>Myomorpha</taxon>
        <taxon>Muroidea</taxon>
        <taxon>Muridae</taxon>
        <taxon>Murinae</taxon>
        <taxon>Rattus</taxon>
    </lineage>
</organism>
<accession>Q5XI33</accession>
<sequence>MDYAMKSLSLLYPRSLSRHVAVSTAVVTQQLVSEPSRETPRARPCRVSTADRKVRKGIMAHSLEDLLGKVQDILKLKDKPFSLVLEEDGTIVETEEYFQALPRDTVFMVLQKGQKWKSPSEQRKKKAQLSLSQKPTKKIDVARVTFDLYKLNPQDFIGCLNVKATLYDTYSLSYDLHCYRAKRIVKEMLRWTLFSMQATGHMLLGTSSYMQQFLDATEEEQPSKAKASLLPACLKMLQ</sequence>
<name>CIDEC_RAT</name>
<comment type="function">
    <text evidence="1 2 4">Lipid transferase specifically expressed in white adipose tissue, which promotes unilocular lipid droplet formation by mediating lipid droplet fusion (By similarity). Lipid droplet fusion promotes their enlargement, restricting lipolysis and favoring lipid storage (By similarity). Localizes on the lipid droplet surface, at focal contact sites between lipid droplets, and mediates atypical lipid droplet fusion by undergoing liquid-liquid phase separation (LLPS) and promoting directional net neutral lipid transfer from the smaller to larger lipid droplets (By similarity). The transfer direction may be driven by the internal pressure difference between the contacting lipid droplet pair (By similarity). Its role in neutral lipid transfer and lipid droplet enlargement is activated by the interaction with PLIN1 (By similarity). May also act as a CEBPB coactivator in the white adipose tissue to control the expression of a subset of CEBPB downstream target genes, including SOCS1, SOCS3, TGFB1, TGFBR1, ID2 and XDH (PubMed:23233732). When overexpressed in preadipocytes, induces apoptosis or increases cell susceptibility to apoptosis induced by serum deprivation or TGFB treatment (By similarity).</text>
</comment>
<comment type="catalytic activity">
    <reaction evidence="1">
        <text>a triacyl-sn-glycerol(in) = a triacyl-sn-glycerol(out)</text>
        <dbReference type="Rhea" id="RHEA:39011"/>
        <dbReference type="ChEBI" id="CHEBI:64615"/>
    </reaction>
</comment>
<comment type="subunit">
    <text evidence="1 2 4">Homodimer (By similarity). Interacts with CIDEA (By similarity). Homooligomer; undergoes liquid-liquid phase separation (LLPS) via its N-terminus, facilitating lipid droplet fusion, occurs at the lipid droplet contact sites (By similarity). Interacts with PLIN1 (By similarity). Interacts with NFAT5; this interaction is direct and retains NFAT5 in the cytoplasm (PubMed:23233732). Interacts with CEBPB (By similarity). Interacts with isoform CLSTN3beta of CLSTN3; inhibiting the lipid transferase activity of CIDEC (By similarity).</text>
</comment>
<comment type="subcellular location">
    <subcellularLocation>
        <location evidence="1">Lipid droplet</location>
    </subcellularLocation>
    <subcellularLocation>
        <location evidence="1">Endoplasmic reticulum</location>
    </subcellularLocation>
    <subcellularLocation>
        <location evidence="1">Nucleus</location>
    </subcellularLocation>
    <text evidence="1">Diffuses quickly on lipid droplet surface, but becomes trapped and clustered at lipid droplet contact sites, thereby enabling its rapid enrichment at lipid droplet contact sites.</text>
</comment>
<comment type="induction">
    <text evidence="4">Down-regulated upon hypertonic conditions.</text>
</comment>
<comment type="domain">
    <text evidence="1">The CIDE-N domain is involved in homodimerization which is crucial for its function in promoting lipid exchange and transfer.</text>
</comment>
<comment type="PTM">
    <text evidence="1">Ubiquitinated and targeted to proteasomal degradation, resulting in a short half-life (about 15 minutes in 3T3-L1 cells). Protein stability depends on triaclyglycerol synthesis, fatty acid availability and lipid droplet formation.</text>
</comment>
<comment type="similarity">
    <text evidence="6">Belongs to the CIDE family.</text>
</comment>
<gene>
    <name evidence="7" type="primary">Cidec</name>
    <name evidence="5" type="synonym">Fsp27</name>
</gene>
<reference key="1">
    <citation type="journal article" date="2004" name="Genome Res.">
        <title>The status, quality, and expansion of the NIH full-length cDNA project: the Mammalian Gene Collection (MGC).</title>
        <authorList>
            <consortium name="The MGC Project Team"/>
        </authorList>
    </citation>
    <scope>NUCLEOTIDE SEQUENCE [LARGE SCALE MRNA]</scope>
    <source>
        <tissue>Kidney</tissue>
    </source>
</reference>
<reference key="2">
    <citation type="journal article" date="2013" name="J. Lipid Res.">
        <title>Fat-specific protein 27 modulates nuclear factor of activated T cells 5 and the cellular response to stress.</title>
        <authorList>
            <person name="Ueno M."/>
            <person name="Shen W.J."/>
            <person name="Patel S."/>
            <person name="Greenberg A.S."/>
            <person name="Azhar S."/>
            <person name="Kraemer F.B."/>
        </authorList>
    </citation>
    <scope>FUNCTION IN OSMOTIC STRESS</scope>
    <scope>INTERACTION WITH NFAT5</scope>
    <scope>INDUCTION</scope>
</reference>
<feature type="chain" id="PRO_0000419721" description="Lipid transferase CIDEC">
    <location>
        <begin position="1"/>
        <end position="238"/>
    </location>
</feature>
<feature type="domain" description="CIDE-N" evidence="3">
    <location>
        <begin position="41"/>
        <end position="118"/>
    </location>
</feature>
<feature type="region of interest" description="Required for liquid-liquid phase separation (LLPS)" evidence="1">
    <location>
        <begin position="1"/>
        <end position="35"/>
    </location>
</feature>
<dbReference type="EMBL" id="BC083860">
    <property type="protein sequence ID" value="AAH83860.1"/>
    <property type="molecule type" value="mRNA"/>
</dbReference>
<dbReference type="RefSeq" id="NP_001019504.2">
    <property type="nucleotide sequence ID" value="NM_001024333.2"/>
</dbReference>
<dbReference type="RefSeq" id="NP_001231726.1">
    <property type="nucleotide sequence ID" value="NM_001244797.1"/>
</dbReference>
<dbReference type="RefSeq" id="NP_001231727.1">
    <property type="nucleotide sequence ID" value="NM_001244798.1"/>
</dbReference>
<dbReference type="SMR" id="Q5XI33"/>
<dbReference type="FunCoup" id="Q5XI33">
    <property type="interactions" value="3"/>
</dbReference>
<dbReference type="STRING" id="10116.ENSRNOP00000073293"/>
<dbReference type="iPTMnet" id="Q5XI33"/>
<dbReference type="PhosphoSitePlus" id="Q5XI33"/>
<dbReference type="PaxDb" id="10116-ENSRNOP00000012136"/>
<dbReference type="Ensembl" id="ENSRNOT00000012136.7">
    <property type="protein sequence ID" value="ENSRNOP00000012136.4"/>
    <property type="gene ID" value="ENSRNOG00000009153.7"/>
</dbReference>
<dbReference type="GeneID" id="500292"/>
<dbReference type="KEGG" id="rno:500292"/>
<dbReference type="UCSC" id="RGD:1562113">
    <property type="organism name" value="rat"/>
</dbReference>
<dbReference type="AGR" id="RGD:1562113"/>
<dbReference type="CTD" id="63924"/>
<dbReference type="RGD" id="1562113">
    <property type="gene designation" value="Cidec"/>
</dbReference>
<dbReference type="eggNOG" id="ENOG502QU28">
    <property type="taxonomic scope" value="Eukaryota"/>
</dbReference>
<dbReference type="GeneTree" id="ENSGT00390000018596"/>
<dbReference type="HOGENOM" id="CLU_090011_1_0_1"/>
<dbReference type="InParanoid" id="Q5XI33"/>
<dbReference type="OMA" id="CYHAKRM"/>
<dbReference type="OrthoDB" id="72600at9989"/>
<dbReference type="PhylomeDB" id="Q5XI33"/>
<dbReference type="TreeFam" id="TF334321"/>
<dbReference type="Reactome" id="R-RNO-8964572">
    <property type="pathway name" value="Lipid particle organization"/>
</dbReference>
<dbReference type="PRO" id="PR:Q5XI33"/>
<dbReference type="Proteomes" id="UP000002494">
    <property type="component" value="Chromosome 4"/>
</dbReference>
<dbReference type="Bgee" id="ENSRNOG00000009153">
    <property type="expression patterns" value="Expressed in liver and 15 other cell types or tissues"/>
</dbReference>
<dbReference type="ExpressionAtlas" id="Q5XI33">
    <property type="expression patterns" value="baseline and differential"/>
</dbReference>
<dbReference type="GO" id="GO:0005829">
    <property type="term" value="C:cytosol"/>
    <property type="evidence" value="ECO:0000266"/>
    <property type="project" value="RGD"/>
</dbReference>
<dbReference type="GO" id="GO:0005783">
    <property type="term" value="C:endoplasmic reticulum"/>
    <property type="evidence" value="ECO:0007669"/>
    <property type="project" value="UniProtKB-SubCell"/>
</dbReference>
<dbReference type="GO" id="GO:0005811">
    <property type="term" value="C:lipid droplet"/>
    <property type="evidence" value="ECO:0000250"/>
    <property type="project" value="UniProtKB"/>
</dbReference>
<dbReference type="GO" id="GO:0005634">
    <property type="term" value="C:nucleus"/>
    <property type="evidence" value="ECO:0007669"/>
    <property type="project" value="UniProtKB-SubCell"/>
</dbReference>
<dbReference type="GO" id="GO:0120013">
    <property type="term" value="F:lipid transfer activity"/>
    <property type="evidence" value="ECO:0000250"/>
    <property type="project" value="UniProtKB"/>
</dbReference>
<dbReference type="GO" id="GO:0140693">
    <property type="term" value="F:molecular condensate scaffold activity"/>
    <property type="evidence" value="ECO:0000250"/>
    <property type="project" value="UniProtKB"/>
</dbReference>
<dbReference type="GO" id="GO:0070300">
    <property type="term" value="F:phosphatidic acid binding"/>
    <property type="evidence" value="ECO:0000250"/>
    <property type="project" value="UniProtKB"/>
</dbReference>
<dbReference type="GO" id="GO:0035091">
    <property type="term" value="F:phosphatidylinositol binding"/>
    <property type="evidence" value="ECO:0000266"/>
    <property type="project" value="RGD"/>
</dbReference>
<dbReference type="GO" id="GO:0001786">
    <property type="term" value="F:phosphatidylserine binding"/>
    <property type="evidence" value="ECO:0000266"/>
    <property type="project" value="RGD"/>
</dbReference>
<dbReference type="GO" id="GO:0006915">
    <property type="term" value="P:apoptotic process"/>
    <property type="evidence" value="ECO:0000266"/>
    <property type="project" value="RGD"/>
</dbReference>
<dbReference type="GO" id="GO:0097194">
    <property type="term" value="P:execution phase of apoptosis"/>
    <property type="evidence" value="ECO:0000266"/>
    <property type="project" value="RGD"/>
</dbReference>
<dbReference type="GO" id="GO:0160077">
    <property type="term" value="P:lipid droplet fusion"/>
    <property type="evidence" value="ECO:0000250"/>
    <property type="project" value="UniProtKB"/>
</dbReference>
<dbReference type="GO" id="GO:0034389">
    <property type="term" value="P:lipid droplet organization"/>
    <property type="evidence" value="ECO:0000266"/>
    <property type="project" value="RGD"/>
</dbReference>
<dbReference type="GO" id="GO:0019915">
    <property type="term" value="P:lipid storage"/>
    <property type="evidence" value="ECO:0000250"/>
    <property type="project" value="UniProtKB"/>
</dbReference>
<dbReference type="GO" id="GO:0050995">
    <property type="term" value="P:negative regulation of lipid catabolic process"/>
    <property type="evidence" value="ECO:0000250"/>
    <property type="project" value="UniProtKB"/>
</dbReference>
<dbReference type="GO" id="GO:0090209">
    <property type="term" value="P:negative regulation of triglyceride metabolic process"/>
    <property type="evidence" value="ECO:0000250"/>
    <property type="project" value="UniProtKB"/>
</dbReference>
<dbReference type="GO" id="GO:0042981">
    <property type="term" value="P:regulation of apoptotic process"/>
    <property type="evidence" value="ECO:0000318"/>
    <property type="project" value="GO_Central"/>
</dbReference>
<dbReference type="FunFam" id="3.10.20.10:FF:000004">
    <property type="entry name" value="cell death activator CIDE-3 isoform X1"/>
    <property type="match status" value="1"/>
</dbReference>
<dbReference type="Gene3D" id="3.10.20.10">
    <property type="match status" value="1"/>
</dbReference>
<dbReference type="InterPro" id="IPR003508">
    <property type="entry name" value="CIDE-N_dom"/>
</dbReference>
<dbReference type="PANTHER" id="PTHR12306">
    <property type="entry name" value="CELL DEATH ACTIVATOR CIDE"/>
    <property type="match status" value="1"/>
</dbReference>
<dbReference type="PANTHER" id="PTHR12306:SF9">
    <property type="entry name" value="LIPID TRANSFERASE CIDEC"/>
    <property type="match status" value="1"/>
</dbReference>
<dbReference type="Pfam" id="PF02017">
    <property type="entry name" value="CIDE-N"/>
    <property type="match status" value="1"/>
</dbReference>
<dbReference type="SMART" id="SM00266">
    <property type="entry name" value="CAD"/>
    <property type="match status" value="1"/>
</dbReference>
<dbReference type="SUPFAM" id="SSF54277">
    <property type="entry name" value="CAD &amp; PB1 domains"/>
    <property type="match status" value="1"/>
</dbReference>
<dbReference type="PROSITE" id="PS51135">
    <property type="entry name" value="CIDE_N"/>
    <property type="match status" value="1"/>
</dbReference>
<keyword id="KW-0010">Activator</keyword>
<keyword id="KW-0053">Apoptosis</keyword>
<keyword id="KW-0256">Endoplasmic reticulum</keyword>
<keyword id="KW-0551">Lipid droplet</keyword>
<keyword id="KW-0445">Lipid transport</keyword>
<keyword id="KW-0539">Nucleus</keyword>
<keyword id="KW-1185">Reference proteome</keyword>
<keyword id="KW-0804">Transcription</keyword>
<keyword id="KW-0805">Transcription regulation</keyword>
<keyword id="KW-0813">Transport</keyword>
<keyword id="KW-0832">Ubl conjugation</keyword>
<proteinExistence type="evidence at protein level"/>